<sequence>MEGASRQSLAAARSVLDQVTAVPIGATAGTVAPEVRRIAGDLSAVATLVGGEPTVRRALTDPGAPPQSRTGLAARLLGGQISQGALAVVSAAVAGRWSRPADLRYALEELAVEATLAEAEAADALDEVEDELFRFGRILGQNPQLSLALTDPAAPTSAKVGLVTRLLSGRAHPVTLRLAEQAVADREQGDIERRLEQLSRIAAARRGRVVAVVRTATVLDADQIARLKAAISRFFGRQIQLQIDLDPAVLGGVAVRVGDEVVDGTVLRRLAAARRGLTR</sequence>
<reference key="1">
    <citation type="journal article" date="2007" name="Genome Res.">
        <title>Genome characteristics of facultatively symbiotic Frankia sp. strains reflect host range and host plant biogeography.</title>
        <authorList>
            <person name="Normand P."/>
            <person name="Lapierre P."/>
            <person name="Tisa L.S."/>
            <person name="Gogarten J.P."/>
            <person name="Alloisio N."/>
            <person name="Bagnarol E."/>
            <person name="Bassi C.A."/>
            <person name="Berry A.M."/>
            <person name="Bickhart D.M."/>
            <person name="Choisne N."/>
            <person name="Couloux A."/>
            <person name="Cournoyer B."/>
            <person name="Cruveiller S."/>
            <person name="Daubin V."/>
            <person name="Demange N."/>
            <person name="Francino M.P."/>
            <person name="Goltsman E."/>
            <person name="Huang Y."/>
            <person name="Kopp O.R."/>
            <person name="Labarre L."/>
            <person name="Lapidus A."/>
            <person name="Lavire C."/>
            <person name="Marechal J."/>
            <person name="Martinez M."/>
            <person name="Mastronunzio J.E."/>
            <person name="Mullin B.C."/>
            <person name="Niemann J."/>
            <person name="Pujic P."/>
            <person name="Rawnsley T."/>
            <person name="Rouy Z."/>
            <person name="Schenowitz C."/>
            <person name="Sellstedt A."/>
            <person name="Tavares F."/>
            <person name="Tomkins J.P."/>
            <person name="Vallenet D."/>
            <person name="Valverde C."/>
            <person name="Wall L.G."/>
            <person name="Wang Y."/>
            <person name="Medigue C."/>
            <person name="Benson D.R."/>
        </authorList>
    </citation>
    <scope>NUCLEOTIDE SEQUENCE [LARGE SCALE GENOMIC DNA]</scope>
    <source>
        <strain>EAN1pec</strain>
    </source>
</reference>
<protein>
    <recommendedName>
        <fullName evidence="1">ATP synthase subunit delta</fullName>
    </recommendedName>
    <alternativeName>
        <fullName evidence="1">ATP synthase F(1) sector subunit delta</fullName>
    </alternativeName>
    <alternativeName>
        <fullName evidence="1">F-type ATPase subunit delta</fullName>
        <shortName evidence="1">F-ATPase subunit delta</shortName>
    </alternativeName>
</protein>
<keyword id="KW-0066">ATP synthesis</keyword>
<keyword id="KW-1003">Cell membrane</keyword>
<keyword id="KW-0139">CF(1)</keyword>
<keyword id="KW-0375">Hydrogen ion transport</keyword>
<keyword id="KW-0406">Ion transport</keyword>
<keyword id="KW-0472">Membrane</keyword>
<keyword id="KW-0813">Transport</keyword>
<evidence type="ECO:0000255" key="1">
    <source>
        <dbReference type="HAMAP-Rule" id="MF_01416"/>
    </source>
</evidence>
<comment type="function">
    <text evidence="1">F(1)F(0) ATP synthase produces ATP from ADP in the presence of a proton or sodium gradient. F-type ATPases consist of two structural domains, F(1) containing the extramembraneous catalytic core and F(0) containing the membrane proton channel, linked together by a central stalk and a peripheral stalk. During catalysis, ATP synthesis in the catalytic domain of F(1) is coupled via a rotary mechanism of the central stalk subunits to proton translocation.</text>
</comment>
<comment type="function">
    <text evidence="1">This protein is part of the stalk that links CF(0) to CF(1). It either transmits conformational changes from CF(0) to CF(1) or is implicated in proton conduction.</text>
</comment>
<comment type="subunit">
    <text evidence="1">F-type ATPases have 2 components, F(1) - the catalytic core - and F(0) - the membrane proton channel. F(1) has five subunits: alpha(3), beta(3), gamma(1), delta(1), epsilon(1). F(0) has three main subunits: a(1), b(2) and c(10-14). The alpha and beta chains form an alternating ring which encloses part of the gamma chain. F(1) is attached to F(0) by a central stalk formed by the gamma and epsilon chains, while a peripheral stalk is formed by the delta and b chains.</text>
</comment>
<comment type="subcellular location">
    <subcellularLocation>
        <location evidence="1">Cell membrane</location>
        <topology evidence="1">Peripheral membrane protein</topology>
    </subcellularLocation>
</comment>
<comment type="similarity">
    <text evidence="1">Belongs to the ATPase delta chain family.</text>
</comment>
<organism>
    <name type="scientific">Parafrankia sp. (strain EAN1pec)</name>
    <dbReference type="NCBI Taxonomy" id="298653"/>
    <lineage>
        <taxon>Bacteria</taxon>
        <taxon>Bacillati</taxon>
        <taxon>Actinomycetota</taxon>
        <taxon>Actinomycetes</taxon>
        <taxon>Frankiales</taxon>
        <taxon>Frankiaceae</taxon>
        <taxon>Parafrankia</taxon>
    </lineage>
</organism>
<name>ATPD_PARS2</name>
<proteinExistence type="inferred from homology"/>
<feature type="chain" id="PRO_0000370985" description="ATP synthase subunit delta">
    <location>
        <begin position="1"/>
        <end position="279"/>
    </location>
</feature>
<accession>A8L3W2</accession>
<dbReference type="EMBL" id="CP000820">
    <property type="protein sequence ID" value="ABW10477.1"/>
    <property type="molecule type" value="Genomic_DNA"/>
</dbReference>
<dbReference type="RefSeq" id="WP_020458659.1">
    <property type="nucleotide sequence ID" value="NC_009921.1"/>
</dbReference>
<dbReference type="SMR" id="A8L3W2"/>
<dbReference type="STRING" id="298653.Franean1_1021"/>
<dbReference type="KEGG" id="fre:Franean1_1021"/>
<dbReference type="eggNOG" id="COG0712">
    <property type="taxonomic scope" value="Bacteria"/>
</dbReference>
<dbReference type="HOGENOM" id="CLU_088880_0_0_11"/>
<dbReference type="GO" id="GO:0005886">
    <property type="term" value="C:plasma membrane"/>
    <property type="evidence" value="ECO:0007669"/>
    <property type="project" value="UniProtKB-SubCell"/>
</dbReference>
<dbReference type="GO" id="GO:0045259">
    <property type="term" value="C:proton-transporting ATP synthase complex"/>
    <property type="evidence" value="ECO:0007669"/>
    <property type="project" value="UniProtKB-KW"/>
</dbReference>
<dbReference type="GO" id="GO:0046933">
    <property type="term" value="F:proton-transporting ATP synthase activity, rotational mechanism"/>
    <property type="evidence" value="ECO:0007669"/>
    <property type="project" value="UniProtKB-UniRule"/>
</dbReference>
<dbReference type="Gene3D" id="1.10.520.20">
    <property type="entry name" value="N-terminal domain of the delta subunit of the F1F0-ATP synthase"/>
    <property type="match status" value="1"/>
</dbReference>
<dbReference type="HAMAP" id="MF_01416">
    <property type="entry name" value="ATP_synth_delta_bact"/>
    <property type="match status" value="1"/>
</dbReference>
<dbReference type="InterPro" id="IPR026015">
    <property type="entry name" value="ATP_synth_OSCP/delta_N_sf"/>
</dbReference>
<dbReference type="InterPro" id="IPR020781">
    <property type="entry name" value="ATPase_OSCP/d_CS"/>
</dbReference>
<dbReference type="InterPro" id="IPR000711">
    <property type="entry name" value="ATPase_OSCP/dsu"/>
</dbReference>
<dbReference type="NCBIfam" id="NF009967">
    <property type="entry name" value="PRK13430.1"/>
    <property type="match status" value="1"/>
</dbReference>
<dbReference type="PANTHER" id="PTHR11910">
    <property type="entry name" value="ATP SYNTHASE DELTA CHAIN"/>
    <property type="match status" value="1"/>
</dbReference>
<dbReference type="Pfam" id="PF00213">
    <property type="entry name" value="OSCP"/>
    <property type="match status" value="1"/>
</dbReference>
<dbReference type="PRINTS" id="PR00125">
    <property type="entry name" value="ATPASEDELTA"/>
</dbReference>
<dbReference type="PROSITE" id="PS00389">
    <property type="entry name" value="ATPASE_DELTA"/>
    <property type="match status" value="1"/>
</dbReference>
<gene>
    <name evidence="1" type="primary">atpH</name>
    <name type="ordered locus">Franean1_1021</name>
</gene>